<accession>Q6ZLA3</accession>
<name>GH39_ORYSJ</name>
<evidence type="ECO:0000250" key="1"/>
<evidence type="ECO:0000269" key="2">
    <source>
    </source>
</evidence>
<evidence type="ECO:0000305" key="3"/>
<keyword id="KW-0436">Ligase</keyword>
<keyword id="KW-1185">Reference proteome</keyword>
<protein>
    <recommendedName>
        <fullName>Probable indole-3-acetic acid-amido synthetase GH3.9</fullName>
        <ecNumber>6.3.2.-</ecNumber>
    </recommendedName>
    <alternativeName>
        <fullName>Auxin-responsive GH3-like protein 9</fullName>
        <shortName>OsGH3-9</shortName>
    </alternativeName>
</protein>
<sequence>MFVKSETKTRGGLTAWFALTSVYKSEQFKSMAIAYTSPTAAILCEDAFQSMYAQMVCGLCQRHDVVRFGAVFAAALVRAIRFLQLNWGQLAADIEAGELGPHVADPSVREAVSGILRSDAELAEFVRIECSKGDWAGIITRIWPNTKYVDAIVTGAMAQYIRTLQYYSGGLPIVSTSYASSECFFGINLRPVCDPSEVSYTIMPNTAYFEFLPVGEVVDATNLVDLARVEVGREYEVVITTYAGLSRYRVGDVLRVTGFHNAAPQFRFVRRQSVLLSVELDKTDEAELHRAVERASSALLRPRGVSVAEYTSRACTERIPGHYVVYWELLTESPVGAGDGDTVDGETLGRCCLEMEEALSAVYRQGRVADGSIGPLEIRIVRPGTFEEVMDLAVSRGTSIGQYKVPQCVTVPSVVELLDSRVVSSQFSPALPHWIPTPRSD</sequence>
<organism>
    <name type="scientific">Oryza sativa subsp. japonica</name>
    <name type="common">Rice</name>
    <dbReference type="NCBI Taxonomy" id="39947"/>
    <lineage>
        <taxon>Eukaryota</taxon>
        <taxon>Viridiplantae</taxon>
        <taxon>Streptophyta</taxon>
        <taxon>Embryophyta</taxon>
        <taxon>Tracheophyta</taxon>
        <taxon>Spermatophyta</taxon>
        <taxon>Magnoliopsida</taxon>
        <taxon>Liliopsida</taxon>
        <taxon>Poales</taxon>
        <taxon>Poaceae</taxon>
        <taxon>BOP clade</taxon>
        <taxon>Oryzoideae</taxon>
        <taxon>Oryzeae</taxon>
        <taxon>Oryzinae</taxon>
        <taxon>Oryza</taxon>
        <taxon>Oryza sativa</taxon>
    </lineage>
</organism>
<proteinExistence type="evidence at transcript level"/>
<gene>
    <name type="primary">GH3.9</name>
    <name type="ordered locus">Os07g0576500</name>
    <name type="ordered locus">LOC_Os07g38890</name>
    <name type="ORF">OJ1065_B06.9</name>
</gene>
<comment type="function">
    <text evidence="1">May catalyze the synthesis of indole-3-acetic acid (IAA)-amino acid conjugates, providing a mechanism for the plant to cope with the presence of excess auxin.</text>
</comment>
<comment type="tissue specificity">
    <text evidence="2">Expressed in etiolated seedlings and roots.</text>
</comment>
<comment type="induction">
    <text evidence="2">At low level by auxin.</text>
</comment>
<comment type="similarity">
    <text evidence="3">Belongs to the IAA-amido conjugating enzyme family.</text>
</comment>
<reference key="1">
    <citation type="journal article" date="2005" name="Nature">
        <title>The map-based sequence of the rice genome.</title>
        <authorList>
            <consortium name="International rice genome sequencing project (IRGSP)"/>
        </authorList>
    </citation>
    <scope>NUCLEOTIDE SEQUENCE [LARGE SCALE GENOMIC DNA]</scope>
    <source>
        <strain>cv. Nipponbare</strain>
    </source>
</reference>
<reference key="2">
    <citation type="journal article" date="2013" name="Rice">
        <title>Improvement of the Oryza sativa Nipponbare reference genome using next generation sequence and optical map data.</title>
        <authorList>
            <person name="Kawahara Y."/>
            <person name="de la Bastide M."/>
            <person name="Hamilton J.P."/>
            <person name="Kanamori H."/>
            <person name="McCombie W.R."/>
            <person name="Ouyang S."/>
            <person name="Schwartz D.C."/>
            <person name="Tanaka T."/>
            <person name="Wu J."/>
            <person name="Zhou S."/>
            <person name="Childs K.L."/>
            <person name="Davidson R.M."/>
            <person name="Lin H."/>
            <person name="Quesada-Ocampo L."/>
            <person name="Vaillancourt B."/>
            <person name="Sakai H."/>
            <person name="Lee S.S."/>
            <person name="Kim J."/>
            <person name="Numa H."/>
            <person name="Itoh T."/>
            <person name="Buell C.R."/>
            <person name="Matsumoto T."/>
        </authorList>
    </citation>
    <scope>GENOME REANNOTATION</scope>
    <source>
        <strain>cv. Nipponbare</strain>
    </source>
</reference>
<reference key="3">
    <citation type="journal article" date="2003" name="Science">
        <title>Collection, mapping, and annotation of over 28,000 cDNA clones from japonica rice.</title>
        <authorList>
            <consortium name="The rice full-length cDNA consortium"/>
        </authorList>
    </citation>
    <scope>NUCLEOTIDE SEQUENCE [LARGE SCALE MRNA]</scope>
    <source>
        <strain>cv. Nipponbare</strain>
    </source>
</reference>
<reference key="4">
    <citation type="journal article" date="2006" name="Funct. Integr. Genomics">
        <title>The auxin-responsive GH3 gene family in rice (Oryza sativa).</title>
        <authorList>
            <person name="Jain M."/>
            <person name="Kaur N."/>
            <person name="Tyagi A.K."/>
            <person name="Khurana J.P."/>
        </authorList>
    </citation>
    <scope>TISSUE SPECIFICITY</scope>
    <scope>INDUCTION</scope>
    <scope>NOMENCLATURE</scope>
</reference>
<dbReference type="EC" id="6.3.2.-"/>
<dbReference type="EMBL" id="AP003804">
    <property type="protein sequence ID" value="BAC83064.1"/>
    <property type="molecule type" value="Genomic_DNA"/>
</dbReference>
<dbReference type="EMBL" id="AP014963">
    <property type="status" value="NOT_ANNOTATED_CDS"/>
    <property type="molecule type" value="Genomic_DNA"/>
</dbReference>
<dbReference type="EMBL" id="AK106839">
    <property type="status" value="NOT_ANNOTATED_CDS"/>
    <property type="molecule type" value="mRNA"/>
</dbReference>
<dbReference type="SMR" id="Q6ZLA3"/>
<dbReference type="FunCoup" id="Q6ZLA3">
    <property type="interactions" value="126"/>
</dbReference>
<dbReference type="PaxDb" id="39947-Q6ZLA3"/>
<dbReference type="InParanoid" id="Q6ZLA3"/>
<dbReference type="Proteomes" id="UP000000763">
    <property type="component" value="Chromosome 7"/>
</dbReference>
<dbReference type="Proteomes" id="UP000059680">
    <property type="component" value="Chromosome 7"/>
</dbReference>
<dbReference type="GO" id="GO:0005737">
    <property type="term" value="C:cytoplasm"/>
    <property type="evidence" value="ECO:0000318"/>
    <property type="project" value="GO_Central"/>
</dbReference>
<dbReference type="GO" id="GO:0016881">
    <property type="term" value="F:acid-amino acid ligase activity"/>
    <property type="evidence" value="ECO:0000318"/>
    <property type="project" value="GO_Central"/>
</dbReference>
<dbReference type="GO" id="GO:0009733">
    <property type="term" value="P:response to auxin"/>
    <property type="evidence" value="ECO:0000305"/>
    <property type="project" value="Gramene"/>
</dbReference>
<dbReference type="GO" id="GO:0009416">
    <property type="term" value="P:response to light stimulus"/>
    <property type="evidence" value="ECO:0000305"/>
    <property type="project" value="Gramene"/>
</dbReference>
<dbReference type="InterPro" id="IPR004993">
    <property type="entry name" value="GH3"/>
</dbReference>
<dbReference type="InterPro" id="IPR055378">
    <property type="entry name" value="GH3_C"/>
</dbReference>
<dbReference type="InterPro" id="IPR055377">
    <property type="entry name" value="GH3_M"/>
</dbReference>
<dbReference type="PANTHER" id="PTHR31901">
    <property type="entry name" value="GH3 DOMAIN-CONTAINING PROTEIN"/>
    <property type="match status" value="1"/>
</dbReference>
<dbReference type="PANTHER" id="PTHR31901:SF96">
    <property type="entry name" value="INDOLE-3-ACETIC ACID-AMIDO SYNTHETASE GH3.1-RELATED"/>
    <property type="match status" value="1"/>
</dbReference>
<dbReference type="Pfam" id="PF03321">
    <property type="entry name" value="GH3"/>
    <property type="match status" value="1"/>
</dbReference>
<dbReference type="Pfam" id="PF23572">
    <property type="entry name" value="GH3_C"/>
    <property type="match status" value="1"/>
</dbReference>
<dbReference type="Pfam" id="PF23571">
    <property type="entry name" value="GH3_M"/>
    <property type="match status" value="1"/>
</dbReference>
<feature type="chain" id="PRO_0000203586" description="Probable indole-3-acetic acid-amido synthetase GH3.9">
    <location>
        <begin position="1"/>
        <end position="441"/>
    </location>
</feature>